<accession>B7NLM0</accession>
<name>RL15_ECO7I</name>
<reference key="1">
    <citation type="journal article" date="2009" name="PLoS Genet.">
        <title>Organised genome dynamics in the Escherichia coli species results in highly diverse adaptive paths.</title>
        <authorList>
            <person name="Touchon M."/>
            <person name="Hoede C."/>
            <person name="Tenaillon O."/>
            <person name="Barbe V."/>
            <person name="Baeriswyl S."/>
            <person name="Bidet P."/>
            <person name="Bingen E."/>
            <person name="Bonacorsi S."/>
            <person name="Bouchier C."/>
            <person name="Bouvet O."/>
            <person name="Calteau A."/>
            <person name="Chiapello H."/>
            <person name="Clermont O."/>
            <person name="Cruveiller S."/>
            <person name="Danchin A."/>
            <person name="Diard M."/>
            <person name="Dossat C."/>
            <person name="Karoui M.E."/>
            <person name="Frapy E."/>
            <person name="Garry L."/>
            <person name="Ghigo J.M."/>
            <person name="Gilles A.M."/>
            <person name="Johnson J."/>
            <person name="Le Bouguenec C."/>
            <person name="Lescat M."/>
            <person name="Mangenot S."/>
            <person name="Martinez-Jehanne V."/>
            <person name="Matic I."/>
            <person name="Nassif X."/>
            <person name="Oztas S."/>
            <person name="Petit M.A."/>
            <person name="Pichon C."/>
            <person name="Rouy Z."/>
            <person name="Ruf C.S."/>
            <person name="Schneider D."/>
            <person name="Tourret J."/>
            <person name="Vacherie B."/>
            <person name="Vallenet D."/>
            <person name="Medigue C."/>
            <person name="Rocha E.P.C."/>
            <person name="Denamur E."/>
        </authorList>
    </citation>
    <scope>NUCLEOTIDE SEQUENCE [LARGE SCALE GENOMIC DNA]</scope>
    <source>
        <strain>IAI39 / ExPEC</strain>
    </source>
</reference>
<sequence>MRLNTLSPAEGSKKAGKRLGRGIGSGLGKTGGRGHKGQKSRSGGGVRRGFEGGQMPLYRRLPKFGFTSRKAAITAEVRLSDLAKVEGGVVDLNTLKAANIIGIQIEFAKVILAGEVTTPVTVRGLRVTKGARAAIEAAGGKIEE</sequence>
<proteinExistence type="inferred from homology"/>
<feature type="chain" id="PRO_1000142812" description="Large ribosomal subunit protein uL15">
    <location>
        <begin position="1"/>
        <end position="144"/>
    </location>
</feature>
<feature type="region of interest" description="Disordered" evidence="2">
    <location>
        <begin position="1"/>
        <end position="54"/>
    </location>
</feature>
<feature type="compositionally biased region" description="Gly residues" evidence="2">
    <location>
        <begin position="21"/>
        <end position="31"/>
    </location>
</feature>
<protein>
    <recommendedName>
        <fullName evidence="1">Large ribosomal subunit protein uL15</fullName>
    </recommendedName>
    <alternativeName>
        <fullName evidence="3">50S ribosomal protein L15</fullName>
    </alternativeName>
</protein>
<keyword id="KW-0687">Ribonucleoprotein</keyword>
<keyword id="KW-0689">Ribosomal protein</keyword>
<keyword id="KW-0694">RNA-binding</keyword>
<keyword id="KW-0699">rRNA-binding</keyword>
<organism>
    <name type="scientific">Escherichia coli O7:K1 (strain IAI39 / ExPEC)</name>
    <dbReference type="NCBI Taxonomy" id="585057"/>
    <lineage>
        <taxon>Bacteria</taxon>
        <taxon>Pseudomonadati</taxon>
        <taxon>Pseudomonadota</taxon>
        <taxon>Gammaproteobacteria</taxon>
        <taxon>Enterobacterales</taxon>
        <taxon>Enterobacteriaceae</taxon>
        <taxon>Escherichia</taxon>
    </lineage>
</organism>
<comment type="function">
    <text evidence="1">Binds to the 23S rRNA.</text>
</comment>
<comment type="subunit">
    <text evidence="1">Part of the 50S ribosomal subunit.</text>
</comment>
<comment type="similarity">
    <text evidence="1">Belongs to the universal ribosomal protein uL15 family.</text>
</comment>
<gene>
    <name evidence="1" type="primary">rplO</name>
    <name type="ordered locus">ECIAI39_3795</name>
</gene>
<evidence type="ECO:0000255" key="1">
    <source>
        <dbReference type="HAMAP-Rule" id="MF_01341"/>
    </source>
</evidence>
<evidence type="ECO:0000256" key="2">
    <source>
        <dbReference type="SAM" id="MobiDB-lite"/>
    </source>
</evidence>
<evidence type="ECO:0000305" key="3"/>
<dbReference type="EMBL" id="CU928164">
    <property type="protein sequence ID" value="CAR19909.1"/>
    <property type="molecule type" value="Genomic_DNA"/>
</dbReference>
<dbReference type="RefSeq" id="WP_001238917.1">
    <property type="nucleotide sequence ID" value="NC_011750.1"/>
</dbReference>
<dbReference type="RefSeq" id="YP_002409692.1">
    <property type="nucleotide sequence ID" value="NC_011750.1"/>
</dbReference>
<dbReference type="SMR" id="B7NLM0"/>
<dbReference type="STRING" id="585057.ECIAI39_3795"/>
<dbReference type="GeneID" id="93778686"/>
<dbReference type="KEGG" id="ect:ECIAI39_3795"/>
<dbReference type="PATRIC" id="fig|585057.6.peg.3932"/>
<dbReference type="HOGENOM" id="CLU_055188_4_2_6"/>
<dbReference type="Proteomes" id="UP000000749">
    <property type="component" value="Chromosome"/>
</dbReference>
<dbReference type="GO" id="GO:0022625">
    <property type="term" value="C:cytosolic large ribosomal subunit"/>
    <property type="evidence" value="ECO:0007669"/>
    <property type="project" value="TreeGrafter"/>
</dbReference>
<dbReference type="GO" id="GO:0019843">
    <property type="term" value="F:rRNA binding"/>
    <property type="evidence" value="ECO:0007669"/>
    <property type="project" value="UniProtKB-UniRule"/>
</dbReference>
<dbReference type="GO" id="GO:0003735">
    <property type="term" value="F:structural constituent of ribosome"/>
    <property type="evidence" value="ECO:0007669"/>
    <property type="project" value="InterPro"/>
</dbReference>
<dbReference type="GO" id="GO:0006412">
    <property type="term" value="P:translation"/>
    <property type="evidence" value="ECO:0007669"/>
    <property type="project" value="UniProtKB-UniRule"/>
</dbReference>
<dbReference type="FunFam" id="3.100.10.10:FF:000003">
    <property type="entry name" value="50S ribosomal protein L15"/>
    <property type="match status" value="1"/>
</dbReference>
<dbReference type="Gene3D" id="3.100.10.10">
    <property type="match status" value="1"/>
</dbReference>
<dbReference type="HAMAP" id="MF_01341">
    <property type="entry name" value="Ribosomal_uL15"/>
    <property type="match status" value="1"/>
</dbReference>
<dbReference type="InterPro" id="IPR030878">
    <property type="entry name" value="Ribosomal_uL15"/>
</dbReference>
<dbReference type="InterPro" id="IPR021131">
    <property type="entry name" value="Ribosomal_uL15/eL18"/>
</dbReference>
<dbReference type="InterPro" id="IPR036227">
    <property type="entry name" value="Ribosomal_uL15/eL18_sf"/>
</dbReference>
<dbReference type="InterPro" id="IPR005749">
    <property type="entry name" value="Ribosomal_uL15_bac-type"/>
</dbReference>
<dbReference type="InterPro" id="IPR001196">
    <property type="entry name" value="Ribosomal_uL15_CS"/>
</dbReference>
<dbReference type="NCBIfam" id="TIGR01071">
    <property type="entry name" value="rplO_bact"/>
    <property type="match status" value="1"/>
</dbReference>
<dbReference type="PANTHER" id="PTHR12934">
    <property type="entry name" value="50S RIBOSOMAL PROTEIN L15"/>
    <property type="match status" value="1"/>
</dbReference>
<dbReference type="PANTHER" id="PTHR12934:SF11">
    <property type="entry name" value="LARGE RIBOSOMAL SUBUNIT PROTEIN UL15M"/>
    <property type="match status" value="1"/>
</dbReference>
<dbReference type="Pfam" id="PF00828">
    <property type="entry name" value="Ribosomal_L27A"/>
    <property type="match status" value="1"/>
</dbReference>
<dbReference type="SUPFAM" id="SSF52080">
    <property type="entry name" value="Ribosomal proteins L15p and L18e"/>
    <property type="match status" value="1"/>
</dbReference>
<dbReference type="PROSITE" id="PS00475">
    <property type="entry name" value="RIBOSOMAL_L15"/>
    <property type="match status" value="1"/>
</dbReference>